<keyword id="KW-0413">Isomerase</keyword>
<keyword id="KW-0460">Magnesium</keyword>
<keyword id="KW-0479">Metal-binding</keyword>
<keyword id="KW-0597">Phosphoprotein</keyword>
<accession>Q47HH9</accession>
<name>GLMM_DECAR</name>
<sequence>MTRKYFGTDGVRGRVGQSPITPDFVMRLGYSAGKALLGRSEMPAGDRPAVLIGKDTRLSGYMLESALEAGFSAAGVEVCLVGPLPTPAVAYLTRALRLQAGIVISASHNPYYDNGIKFFSAQGTKLPDEVERAIEAGIDQPMVCAPPADLGRVRRIEDARGRYIEFCKSTFPNDLDLRGLKIVIDCAHGAAYHIAPSVFHELGADVVSIGVQPNGLNINDAVGATAPKALCEAVLANRADLGIALDGDADRLQMVDAEGNLYDGDQLLYAIVRSRARSAPVKGVAGTLMSNLALEHALAKLNIPFARAAVGDRYVVEMLSEKGWLFGGENSGHILALDRHTTGDGIVAALQVLAALRELGGSLKELLGGLVLYPQKLINVPVMRGFPWKEHPAITSALADTEVSLQGRGRVLLRASGTEPLLRVMVEGEDAVEVTYAAEKLAAVVRESAQ</sequence>
<dbReference type="EC" id="5.4.2.10" evidence="1"/>
<dbReference type="EMBL" id="CP000089">
    <property type="protein sequence ID" value="AAZ45702.1"/>
    <property type="molecule type" value="Genomic_DNA"/>
</dbReference>
<dbReference type="SMR" id="Q47HH9"/>
<dbReference type="STRING" id="159087.Daro_0946"/>
<dbReference type="KEGG" id="dar:Daro_0946"/>
<dbReference type="eggNOG" id="COG1109">
    <property type="taxonomic scope" value="Bacteria"/>
</dbReference>
<dbReference type="HOGENOM" id="CLU_016950_7_0_4"/>
<dbReference type="OrthoDB" id="9803322at2"/>
<dbReference type="GO" id="GO:0005829">
    <property type="term" value="C:cytosol"/>
    <property type="evidence" value="ECO:0007669"/>
    <property type="project" value="TreeGrafter"/>
</dbReference>
<dbReference type="GO" id="GO:0000287">
    <property type="term" value="F:magnesium ion binding"/>
    <property type="evidence" value="ECO:0007669"/>
    <property type="project" value="UniProtKB-UniRule"/>
</dbReference>
<dbReference type="GO" id="GO:0008966">
    <property type="term" value="F:phosphoglucosamine mutase activity"/>
    <property type="evidence" value="ECO:0007669"/>
    <property type="project" value="UniProtKB-UniRule"/>
</dbReference>
<dbReference type="GO" id="GO:0004615">
    <property type="term" value="F:phosphomannomutase activity"/>
    <property type="evidence" value="ECO:0007669"/>
    <property type="project" value="TreeGrafter"/>
</dbReference>
<dbReference type="GO" id="GO:0005975">
    <property type="term" value="P:carbohydrate metabolic process"/>
    <property type="evidence" value="ECO:0007669"/>
    <property type="project" value="InterPro"/>
</dbReference>
<dbReference type="GO" id="GO:0009252">
    <property type="term" value="P:peptidoglycan biosynthetic process"/>
    <property type="evidence" value="ECO:0007669"/>
    <property type="project" value="TreeGrafter"/>
</dbReference>
<dbReference type="GO" id="GO:0006048">
    <property type="term" value="P:UDP-N-acetylglucosamine biosynthetic process"/>
    <property type="evidence" value="ECO:0007669"/>
    <property type="project" value="TreeGrafter"/>
</dbReference>
<dbReference type="CDD" id="cd05802">
    <property type="entry name" value="GlmM"/>
    <property type="match status" value="1"/>
</dbReference>
<dbReference type="FunFam" id="3.30.310.50:FF:000001">
    <property type="entry name" value="Phosphoglucosamine mutase"/>
    <property type="match status" value="1"/>
</dbReference>
<dbReference type="FunFam" id="3.40.120.10:FF:000001">
    <property type="entry name" value="Phosphoglucosamine mutase"/>
    <property type="match status" value="1"/>
</dbReference>
<dbReference type="FunFam" id="3.40.120.10:FF:000003">
    <property type="entry name" value="Phosphoglucosamine mutase"/>
    <property type="match status" value="1"/>
</dbReference>
<dbReference type="Gene3D" id="3.40.120.10">
    <property type="entry name" value="Alpha-D-Glucose-1,6-Bisphosphate, subunit A, domain 3"/>
    <property type="match status" value="3"/>
</dbReference>
<dbReference type="Gene3D" id="3.30.310.50">
    <property type="entry name" value="Alpha-D-phosphohexomutase, C-terminal domain"/>
    <property type="match status" value="1"/>
</dbReference>
<dbReference type="HAMAP" id="MF_01554_B">
    <property type="entry name" value="GlmM_B"/>
    <property type="match status" value="1"/>
</dbReference>
<dbReference type="InterPro" id="IPR005844">
    <property type="entry name" value="A-D-PHexomutase_a/b/a-I"/>
</dbReference>
<dbReference type="InterPro" id="IPR016055">
    <property type="entry name" value="A-D-PHexomutase_a/b/a-I/II/III"/>
</dbReference>
<dbReference type="InterPro" id="IPR005845">
    <property type="entry name" value="A-D-PHexomutase_a/b/a-II"/>
</dbReference>
<dbReference type="InterPro" id="IPR005846">
    <property type="entry name" value="A-D-PHexomutase_a/b/a-III"/>
</dbReference>
<dbReference type="InterPro" id="IPR005843">
    <property type="entry name" value="A-D-PHexomutase_C"/>
</dbReference>
<dbReference type="InterPro" id="IPR036900">
    <property type="entry name" value="A-D-PHexomutase_C_sf"/>
</dbReference>
<dbReference type="InterPro" id="IPR016066">
    <property type="entry name" value="A-D-PHexomutase_CS"/>
</dbReference>
<dbReference type="InterPro" id="IPR005841">
    <property type="entry name" value="Alpha-D-phosphohexomutase_SF"/>
</dbReference>
<dbReference type="InterPro" id="IPR006352">
    <property type="entry name" value="GlmM_bact"/>
</dbReference>
<dbReference type="InterPro" id="IPR050060">
    <property type="entry name" value="Phosphoglucosamine_mutase"/>
</dbReference>
<dbReference type="NCBIfam" id="TIGR01455">
    <property type="entry name" value="glmM"/>
    <property type="match status" value="1"/>
</dbReference>
<dbReference type="NCBIfam" id="NF008139">
    <property type="entry name" value="PRK10887.1"/>
    <property type="match status" value="1"/>
</dbReference>
<dbReference type="PANTHER" id="PTHR42946:SF1">
    <property type="entry name" value="PHOSPHOGLUCOMUTASE (ALPHA-D-GLUCOSE-1,6-BISPHOSPHATE-DEPENDENT)"/>
    <property type="match status" value="1"/>
</dbReference>
<dbReference type="PANTHER" id="PTHR42946">
    <property type="entry name" value="PHOSPHOHEXOSE MUTASE"/>
    <property type="match status" value="1"/>
</dbReference>
<dbReference type="Pfam" id="PF02878">
    <property type="entry name" value="PGM_PMM_I"/>
    <property type="match status" value="1"/>
</dbReference>
<dbReference type="Pfam" id="PF02879">
    <property type="entry name" value="PGM_PMM_II"/>
    <property type="match status" value="1"/>
</dbReference>
<dbReference type="Pfam" id="PF02880">
    <property type="entry name" value="PGM_PMM_III"/>
    <property type="match status" value="1"/>
</dbReference>
<dbReference type="Pfam" id="PF00408">
    <property type="entry name" value="PGM_PMM_IV"/>
    <property type="match status" value="1"/>
</dbReference>
<dbReference type="PRINTS" id="PR00509">
    <property type="entry name" value="PGMPMM"/>
</dbReference>
<dbReference type="SUPFAM" id="SSF55957">
    <property type="entry name" value="Phosphoglucomutase, C-terminal domain"/>
    <property type="match status" value="1"/>
</dbReference>
<dbReference type="SUPFAM" id="SSF53738">
    <property type="entry name" value="Phosphoglucomutase, first 3 domains"/>
    <property type="match status" value="3"/>
</dbReference>
<dbReference type="PROSITE" id="PS00710">
    <property type="entry name" value="PGM_PMM"/>
    <property type="match status" value="1"/>
</dbReference>
<gene>
    <name evidence="1" type="primary">glmM</name>
    <name type="ordered locus">Daro_0946</name>
</gene>
<feature type="chain" id="PRO_0000147882" description="Phosphoglucosamine mutase">
    <location>
        <begin position="1"/>
        <end position="450"/>
    </location>
</feature>
<feature type="active site" description="Phosphoserine intermediate" evidence="1">
    <location>
        <position position="107"/>
    </location>
</feature>
<feature type="binding site" description="via phosphate group" evidence="1">
    <location>
        <position position="107"/>
    </location>
    <ligand>
        <name>Mg(2+)</name>
        <dbReference type="ChEBI" id="CHEBI:18420"/>
    </ligand>
</feature>
<feature type="binding site" evidence="1">
    <location>
        <position position="246"/>
    </location>
    <ligand>
        <name>Mg(2+)</name>
        <dbReference type="ChEBI" id="CHEBI:18420"/>
    </ligand>
</feature>
<feature type="binding site" evidence="1">
    <location>
        <position position="248"/>
    </location>
    <ligand>
        <name>Mg(2+)</name>
        <dbReference type="ChEBI" id="CHEBI:18420"/>
    </ligand>
</feature>
<feature type="binding site" evidence="1">
    <location>
        <position position="250"/>
    </location>
    <ligand>
        <name>Mg(2+)</name>
        <dbReference type="ChEBI" id="CHEBI:18420"/>
    </ligand>
</feature>
<feature type="modified residue" description="Phosphoserine" evidence="1">
    <location>
        <position position="107"/>
    </location>
</feature>
<protein>
    <recommendedName>
        <fullName evidence="1">Phosphoglucosamine mutase</fullName>
        <ecNumber evidence="1">5.4.2.10</ecNumber>
    </recommendedName>
</protein>
<comment type="function">
    <text evidence="1">Catalyzes the conversion of glucosamine-6-phosphate to glucosamine-1-phosphate.</text>
</comment>
<comment type="catalytic activity">
    <reaction evidence="1">
        <text>alpha-D-glucosamine 1-phosphate = D-glucosamine 6-phosphate</text>
        <dbReference type="Rhea" id="RHEA:23424"/>
        <dbReference type="ChEBI" id="CHEBI:58516"/>
        <dbReference type="ChEBI" id="CHEBI:58725"/>
        <dbReference type="EC" id="5.4.2.10"/>
    </reaction>
</comment>
<comment type="cofactor">
    <cofactor evidence="1">
        <name>Mg(2+)</name>
        <dbReference type="ChEBI" id="CHEBI:18420"/>
    </cofactor>
    <text evidence="1">Binds 1 Mg(2+) ion per subunit.</text>
</comment>
<comment type="PTM">
    <text evidence="1">Activated by phosphorylation.</text>
</comment>
<comment type="similarity">
    <text evidence="1">Belongs to the phosphohexose mutase family.</text>
</comment>
<proteinExistence type="inferred from homology"/>
<reference key="1">
    <citation type="journal article" date="2009" name="BMC Genomics">
        <title>Metabolic analysis of the soil microbe Dechloromonas aromatica str. RCB: indications of a surprisingly complex life-style and cryptic anaerobic pathways for aromatic degradation.</title>
        <authorList>
            <person name="Salinero K.K."/>
            <person name="Keller K."/>
            <person name="Feil W.S."/>
            <person name="Feil H."/>
            <person name="Trong S."/>
            <person name="Di Bartolo G."/>
            <person name="Lapidus A."/>
        </authorList>
    </citation>
    <scope>NUCLEOTIDE SEQUENCE [LARGE SCALE GENOMIC DNA]</scope>
    <source>
        <strain>RCB</strain>
    </source>
</reference>
<evidence type="ECO:0000255" key="1">
    <source>
        <dbReference type="HAMAP-Rule" id="MF_01554"/>
    </source>
</evidence>
<organism>
    <name type="scientific">Dechloromonas aromatica (strain RCB)</name>
    <dbReference type="NCBI Taxonomy" id="159087"/>
    <lineage>
        <taxon>Bacteria</taxon>
        <taxon>Pseudomonadati</taxon>
        <taxon>Pseudomonadota</taxon>
        <taxon>Betaproteobacteria</taxon>
        <taxon>Rhodocyclales</taxon>
        <taxon>Azonexaceae</taxon>
        <taxon>Dechloromonas</taxon>
    </lineage>
</organism>